<dbReference type="EMBL" id="BC079224">
    <property type="protein sequence ID" value="AAH79224.1"/>
    <property type="molecule type" value="mRNA"/>
</dbReference>
<dbReference type="RefSeq" id="NP_001014199.1">
    <property type="nucleotide sequence ID" value="NM_001014177.1"/>
</dbReference>
<dbReference type="RefSeq" id="XP_008759739.1">
    <property type="nucleotide sequence ID" value="XM_008761517.1"/>
</dbReference>
<dbReference type="RefSeq" id="XP_063138305.1">
    <property type="nucleotide sequence ID" value="XM_063282235.1"/>
</dbReference>
<dbReference type="SMR" id="Q6AY22"/>
<dbReference type="FunCoup" id="Q6AY22">
    <property type="interactions" value="356"/>
</dbReference>
<dbReference type="STRING" id="10116.ENSRNOP00000021063"/>
<dbReference type="iPTMnet" id="Q6AY22"/>
<dbReference type="PhosphoSitePlus" id="Q6AY22"/>
<dbReference type="PaxDb" id="10116-ENSRNOP00000021063"/>
<dbReference type="Ensembl" id="ENSRNOT00000021063.5">
    <property type="protein sequence ID" value="ENSRNOP00000021063.4"/>
    <property type="gene ID" value="ENSRNOG00000015678.5"/>
</dbReference>
<dbReference type="GeneID" id="362056"/>
<dbReference type="KEGG" id="rno:362056"/>
<dbReference type="AGR" id="RGD:1359500"/>
<dbReference type="CTD" id="100505741"/>
<dbReference type="RGD" id="1359500">
    <property type="gene designation" value="Spata1"/>
</dbReference>
<dbReference type="eggNOG" id="ENOG502QT5V">
    <property type="taxonomic scope" value="Eukaryota"/>
</dbReference>
<dbReference type="GeneTree" id="ENSGT00390000003298"/>
<dbReference type="HOGENOM" id="CLU_056868_0_0_1"/>
<dbReference type="InParanoid" id="Q6AY22"/>
<dbReference type="OMA" id="DKMKLTV"/>
<dbReference type="OrthoDB" id="9901850at2759"/>
<dbReference type="PhylomeDB" id="Q6AY22"/>
<dbReference type="TreeFam" id="TF328372"/>
<dbReference type="PRO" id="PR:Q6AY22"/>
<dbReference type="Proteomes" id="UP000002494">
    <property type="component" value="Chromosome 2"/>
</dbReference>
<dbReference type="Bgee" id="ENSRNOG00000015678">
    <property type="expression patterns" value="Expressed in testis and 19 other cell types or tissues"/>
</dbReference>
<dbReference type="GO" id="GO:0001669">
    <property type="term" value="C:acrosomal vesicle"/>
    <property type="evidence" value="ECO:0000250"/>
    <property type="project" value="UniProtKB"/>
</dbReference>
<dbReference type="GO" id="GO:0031410">
    <property type="term" value="C:cytoplasmic vesicle"/>
    <property type="evidence" value="ECO:0000266"/>
    <property type="project" value="RGD"/>
</dbReference>
<dbReference type="InterPro" id="IPR039062">
    <property type="entry name" value="SPAT1"/>
</dbReference>
<dbReference type="InterPro" id="IPR031478">
    <property type="entry name" value="SPATA1_C"/>
</dbReference>
<dbReference type="PANTHER" id="PTHR14421">
    <property type="entry name" value="SPERMATOGENESIS-ASSOCIATED PROTEIN 1"/>
    <property type="match status" value="1"/>
</dbReference>
<dbReference type="PANTHER" id="PTHR14421:SF3">
    <property type="entry name" value="SPERMATOGENESIS-ASSOCIATED PROTEIN 1"/>
    <property type="match status" value="1"/>
</dbReference>
<dbReference type="Pfam" id="PF15743">
    <property type="entry name" value="SPATA1_C"/>
    <property type="match status" value="1"/>
</dbReference>
<evidence type="ECO:0000250" key="1">
    <source>
        <dbReference type="UniProtKB" id="Q9D5R4"/>
    </source>
</evidence>
<evidence type="ECO:0000255" key="2"/>
<evidence type="ECO:0000256" key="3">
    <source>
        <dbReference type="SAM" id="MobiDB-lite"/>
    </source>
</evidence>
<reference key="1">
    <citation type="journal article" date="2004" name="Genome Res.">
        <title>The status, quality, and expansion of the NIH full-length cDNA project: the Mammalian Gene Collection (MGC).</title>
        <authorList>
            <consortium name="The MGC Project Team"/>
        </authorList>
    </citation>
    <scope>NUCLEOTIDE SEQUENCE [LARGE SCALE MRNA]</scope>
    <source>
        <tissue>Testis</tissue>
    </source>
</reference>
<protein>
    <recommendedName>
        <fullName>Spermatogenesis-associated protein 1</fullName>
    </recommendedName>
</protein>
<feature type="chain" id="PRO_0000349217" description="Spermatogenesis-associated protein 1">
    <location>
        <begin position="1"/>
        <end position="444"/>
    </location>
</feature>
<feature type="region of interest" description="Disordered" evidence="3">
    <location>
        <begin position="145"/>
        <end position="229"/>
    </location>
</feature>
<feature type="coiled-coil region" evidence="2">
    <location>
        <begin position="268"/>
        <end position="403"/>
    </location>
</feature>
<feature type="compositionally biased region" description="Basic and acidic residues" evidence="3">
    <location>
        <begin position="145"/>
        <end position="160"/>
    </location>
</feature>
<keyword id="KW-0175">Coiled coil</keyword>
<keyword id="KW-0968">Cytoplasmic vesicle</keyword>
<keyword id="KW-1185">Reference proteome</keyword>
<gene>
    <name type="primary">Spata1</name>
</gene>
<name>SPAT1_RAT</name>
<organism>
    <name type="scientific">Rattus norvegicus</name>
    <name type="common">Rat</name>
    <dbReference type="NCBI Taxonomy" id="10116"/>
    <lineage>
        <taxon>Eukaryota</taxon>
        <taxon>Metazoa</taxon>
        <taxon>Chordata</taxon>
        <taxon>Craniata</taxon>
        <taxon>Vertebrata</taxon>
        <taxon>Euteleostomi</taxon>
        <taxon>Mammalia</taxon>
        <taxon>Eutheria</taxon>
        <taxon>Euarchontoglires</taxon>
        <taxon>Glires</taxon>
        <taxon>Rodentia</taxon>
        <taxon>Myomorpha</taxon>
        <taxon>Muroidea</taxon>
        <taxon>Muridae</taxon>
        <taxon>Murinae</taxon>
        <taxon>Rattus</taxon>
    </lineage>
</organism>
<sequence length="444" mass="51099">MSLNPSRPSSSELVELHVFYVPEGSWNYKLNTISIEVINNFISAGFIRVSPQLTLQALRERLGEFLGVDAVAEKFLFLKCIGNNLAVVKEKQESELKLKSFAPPYALQPELYLLPVIDHLGNVYSASTVNLDEQQSVDDTMEIDGTIHRPDSLSLSKDEPGDPSLLENTWRDFPNHEEAEESQPTQQHFGNPRLPGSLEESDDCLGNVKSPFLWKNNDEDEGEEDDKATINRRQAKLVCDKEHSALPDLIDFPSFPSQRVSSRLVDTSLLKIEREKIIEQMKQVKEERKYLENIREELIKKVEKLFEQSKSKRYHACDSWKKKYFDTKKVTASLEEVLTKLREDLELYYKKLLMQLEAREIKMRPRNLANISDSKNYLIIQITEVQHAIDQLKRKLDTDKMKLILEVKMRKQAASDLQTLRADLTQKKMGTPFRSPIFSGSVPT</sequence>
<comment type="subunit">
    <text evidence="1">Interacts with IFT20.</text>
</comment>
<comment type="subcellular location">
    <subcellularLocation>
        <location evidence="1">Cytoplasmic vesicle</location>
        <location evidence="1">Secretory vesicle</location>
        <location evidence="1">Acrosome</location>
    </subcellularLocation>
</comment>
<accession>Q6AY22</accession>
<proteinExistence type="evidence at transcript level"/>